<organism>
    <name type="scientific">Bacillus mycoides (strain KBAB4)</name>
    <name type="common">Bacillus weihenstephanensis</name>
    <dbReference type="NCBI Taxonomy" id="315730"/>
    <lineage>
        <taxon>Bacteria</taxon>
        <taxon>Bacillati</taxon>
        <taxon>Bacillota</taxon>
        <taxon>Bacilli</taxon>
        <taxon>Bacillales</taxon>
        <taxon>Bacillaceae</taxon>
        <taxon>Bacillus</taxon>
        <taxon>Bacillus cereus group</taxon>
    </lineage>
</organism>
<dbReference type="EMBL" id="CP000903">
    <property type="protein sequence ID" value="ABY41289.1"/>
    <property type="molecule type" value="Genomic_DNA"/>
</dbReference>
<dbReference type="RefSeq" id="WP_002009629.1">
    <property type="nucleotide sequence ID" value="NZ_CAKMRX030000149.1"/>
</dbReference>
<dbReference type="SMR" id="A9VN38"/>
<dbReference type="GeneID" id="66264928"/>
<dbReference type="KEGG" id="bwe:BcerKBAB4_0020"/>
<dbReference type="eggNOG" id="COG0353">
    <property type="taxonomic scope" value="Bacteria"/>
</dbReference>
<dbReference type="HOGENOM" id="CLU_060739_1_0_9"/>
<dbReference type="Proteomes" id="UP000002154">
    <property type="component" value="Chromosome"/>
</dbReference>
<dbReference type="GO" id="GO:0003677">
    <property type="term" value="F:DNA binding"/>
    <property type="evidence" value="ECO:0007669"/>
    <property type="project" value="UniProtKB-UniRule"/>
</dbReference>
<dbReference type="GO" id="GO:0008270">
    <property type="term" value="F:zinc ion binding"/>
    <property type="evidence" value="ECO:0007669"/>
    <property type="project" value="UniProtKB-KW"/>
</dbReference>
<dbReference type="GO" id="GO:0006310">
    <property type="term" value="P:DNA recombination"/>
    <property type="evidence" value="ECO:0007669"/>
    <property type="project" value="UniProtKB-UniRule"/>
</dbReference>
<dbReference type="GO" id="GO:0006281">
    <property type="term" value="P:DNA repair"/>
    <property type="evidence" value="ECO:0007669"/>
    <property type="project" value="UniProtKB-UniRule"/>
</dbReference>
<dbReference type="CDD" id="cd01025">
    <property type="entry name" value="TOPRIM_recR"/>
    <property type="match status" value="1"/>
</dbReference>
<dbReference type="Gene3D" id="3.30.60.80">
    <property type="match status" value="1"/>
</dbReference>
<dbReference type="Gene3D" id="3.40.1360.10">
    <property type="match status" value="1"/>
</dbReference>
<dbReference type="Gene3D" id="6.10.250.240">
    <property type="match status" value="1"/>
</dbReference>
<dbReference type="Gene3D" id="1.10.8.420">
    <property type="entry name" value="RecR Domain 1"/>
    <property type="match status" value="1"/>
</dbReference>
<dbReference type="HAMAP" id="MF_00017">
    <property type="entry name" value="RecR"/>
    <property type="match status" value="1"/>
</dbReference>
<dbReference type="InterPro" id="IPR000093">
    <property type="entry name" value="DNA_Rcmb_RecR"/>
</dbReference>
<dbReference type="InterPro" id="IPR023627">
    <property type="entry name" value="Rcmb_RecR"/>
</dbReference>
<dbReference type="InterPro" id="IPR015967">
    <property type="entry name" value="Rcmb_RecR_Znf"/>
</dbReference>
<dbReference type="InterPro" id="IPR006171">
    <property type="entry name" value="TOPRIM_dom"/>
</dbReference>
<dbReference type="InterPro" id="IPR034137">
    <property type="entry name" value="TOPRIM_RecR"/>
</dbReference>
<dbReference type="NCBIfam" id="TIGR00615">
    <property type="entry name" value="recR"/>
    <property type="match status" value="1"/>
</dbReference>
<dbReference type="PANTHER" id="PTHR30446">
    <property type="entry name" value="RECOMBINATION PROTEIN RECR"/>
    <property type="match status" value="1"/>
</dbReference>
<dbReference type="PANTHER" id="PTHR30446:SF0">
    <property type="entry name" value="RECOMBINATION PROTEIN RECR"/>
    <property type="match status" value="1"/>
</dbReference>
<dbReference type="Pfam" id="PF21175">
    <property type="entry name" value="RecR_C"/>
    <property type="match status" value="1"/>
</dbReference>
<dbReference type="Pfam" id="PF21176">
    <property type="entry name" value="RecR_HhH"/>
    <property type="match status" value="1"/>
</dbReference>
<dbReference type="Pfam" id="PF02132">
    <property type="entry name" value="RecR_ZnF"/>
    <property type="match status" value="1"/>
</dbReference>
<dbReference type="Pfam" id="PF13662">
    <property type="entry name" value="Toprim_4"/>
    <property type="match status" value="1"/>
</dbReference>
<dbReference type="SMART" id="SM00493">
    <property type="entry name" value="TOPRIM"/>
    <property type="match status" value="1"/>
</dbReference>
<dbReference type="SUPFAM" id="SSF111304">
    <property type="entry name" value="Recombination protein RecR"/>
    <property type="match status" value="1"/>
</dbReference>
<dbReference type="PROSITE" id="PS01300">
    <property type="entry name" value="RECR"/>
    <property type="match status" value="1"/>
</dbReference>
<dbReference type="PROSITE" id="PS50880">
    <property type="entry name" value="TOPRIM"/>
    <property type="match status" value="1"/>
</dbReference>
<sequence length="198" mass="21982">MHYPEPISKLIDSFMKLPGIGPKTAVRLAFFVLDMKEDDVLGFAKALVNAKRDLAYCSVCGHITDRDPCYICDDSHRDQSVVCVVQEPKDVIAMEKMKEYQGVYHVLRGAISPMEGIGPEDINIPQLLKRLQDETVQEVILATNPNIEGEATAMYISRLLKPTGIKVTRIAHGLPVGGDLEYADEVTLSKALEGRREI</sequence>
<protein>
    <recommendedName>
        <fullName evidence="1">Recombination protein RecR</fullName>
    </recommendedName>
</protein>
<accession>A9VN38</accession>
<evidence type="ECO:0000255" key="1">
    <source>
        <dbReference type="HAMAP-Rule" id="MF_00017"/>
    </source>
</evidence>
<gene>
    <name evidence="1" type="primary">recR</name>
    <name type="ordered locus">BcerKBAB4_0020</name>
</gene>
<comment type="function">
    <text evidence="1">May play a role in DNA repair. It seems to be involved in an RecBC-independent recombinational process of DNA repair. It may act with RecF and RecO.</text>
</comment>
<comment type="similarity">
    <text evidence="1">Belongs to the RecR family.</text>
</comment>
<name>RECR_BACMK</name>
<feature type="chain" id="PRO_1000089704" description="Recombination protein RecR">
    <location>
        <begin position="1"/>
        <end position="198"/>
    </location>
</feature>
<feature type="domain" description="Toprim" evidence="1">
    <location>
        <begin position="80"/>
        <end position="175"/>
    </location>
</feature>
<feature type="zinc finger region" description="C4-type" evidence="1">
    <location>
        <begin position="57"/>
        <end position="72"/>
    </location>
</feature>
<keyword id="KW-0227">DNA damage</keyword>
<keyword id="KW-0233">DNA recombination</keyword>
<keyword id="KW-0234">DNA repair</keyword>
<keyword id="KW-0479">Metal-binding</keyword>
<keyword id="KW-0862">Zinc</keyword>
<keyword id="KW-0863">Zinc-finger</keyword>
<reference key="1">
    <citation type="journal article" date="2008" name="Chem. Biol. Interact.">
        <title>Extending the Bacillus cereus group genomics to putative food-borne pathogens of different toxicity.</title>
        <authorList>
            <person name="Lapidus A."/>
            <person name="Goltsman E."/>
            <person name="Auger S."/>
            <person name="Galleron N."/>
            <person name="Segurens B."/>
            <person name="Dossat C."/>
            <person name="Land M.L."/>
            <person name="Broussolle V."/>
            <person name="Brillard J."/>
            <person name="Guinebretiere M.-H."/>
            <person name="Sanchis V."/>
            <person name="Nguen-the C."/>
            <person name="Lereclus D."/>
            <person name="Richardson P."/>
            <person name="Wincker P."/>
            <person name="Weissenbach J."/>
            <person name="Ehrlich S.D."/>
            <person name="Sorokin A."/>
        </authorList>
    </citation>
    <scope>NUCLEOTIDE SEQUENCE [LARGE SCALE GENOMIC DNA]</scope>
    <source>
        <strain>KBAB4</strain>
    </source>
</reference>
<proteinExistence type="inferred from homology"/>